<dbReference type="EC" id="6.3.5.7" evidence="1"/>
<dbReference type="EMBL" id="CP000705">
    <property type="protein sequence ID" value="ABQ83687.1"/>
    <property type="molecule type" value="Genomic_DNA"/>
</dbReference>
<dbReference type="RefSeq" id="WP_003668756.1">
    <property type="nucleotide sequence ID" value="NZ_AZDD01000010.1"/>
</dbReference>
<dbReference type="SMR" id="A5VLG3"/>
<dbReference type="STRING" id="557436.Lreu_1441"/>
<dbReference type="KEGG" id="lre:Lreu_1441"/>
<dbReference type="PATRIC" id="fig|557436.17.peg.182"/>
<dbReference type="eggNOG" id="COG0154">
    <property type="taxonomic scope" value="Bacteria"/>
</dbReference>
<dbReference type="HOGENOM" id="CLU_009600_0_3_9"/>
<dbReference type="Proteomes" id="UP000001991">
    <property type="component" value="Chromosome"/>
</dbReference>
<dbReference type="GO" id="GO:0030956">
    <property type="term" value="C:glutamyl-tRNA(Gln) amidotransferase complex"/>
    <property type="evidence" value="ECO:0007669"/>
    <property type="project" value="InterPro"/>
</dbReference>
<dbReference type="GO" id="GO:0005524">
    <property type="term" value="F:ATP binding"/>
    <property type="evidence" value="ECO:0007669"/>
    <property type="project" value="UniProtKB-KW"/>
</dbReference>
<dbReference type="GO" id="GO:0050567">
    <property type="term" value="F:glutaminyl-tRNA synthase (glutamine-hydrolyzing) activity"/>
    <property type="evidence" value="ECO:0007669"/>
    <property type="project" value="UniProtKB-UniRule"/>
</dbReference>
<dbReference type="GO" id="GO:0006412">
    <property type="term" value="P:translation"/>
    <property type="evidence" value="ECO:0007669"/>
    <property type="project" value="UniProtKB-UniRule"/>
</dbReference>
<dbReference type="Gene3D" id="3.90.1300.10">
    <property type="entry name" value="Amidase signature (AS) domain"/>
    <property type="match status" value="1"/>
</dbReference>
<dbReference type="HAMAP" id="MF_00120">
    <property type="entry name" value="GatA"/>
    <property type="match status" value="1"/>
</dbReference>
<dbReference type="InterPro" id="IPR000120">
    <property type="entry name" value="Amidase"/>
</dbReference>
<dbReference type="InterPro" id="IPR020556">
    <property type="entry name" value="Amidase_CS"/>
</dbReference>
<dbReference type="InterPro" id="IPR023631">
    <property type="entry name" value="Amidase_dom"/>
</dbReference>
<dbReference type="InterPro" id="IPR036928">
    <property type="entry name" value="AS_sf"/>
</dbReference>
<dbReference type="InterPro" id="IPR004412">
    <property type="entry name" value="GatA"/>
</dbReference>
<dbReference type="NCBIfam" id="TIGR00132">
    <property type="entry name" value="gatA"/>
    <property type="match status" value="1"/>
</dbReference>
<dbReference type="PANTHER" id="PTHR11895:SF151">
    <property type="entry name" value="GLUTAMYL-TRNA(GLN) AMIDOTRANSFERASE SUBUNIT A"/>
    <property type="match status" value="1"/>
</dbReference>
<dbReference type="PANTHER" id="PTHR11895">
    <property type="entry name" value="TRANSAMIDASE"/>
    <property type="match status" value="1"/>
</dbReference>
<dbReference type="Pfam" id="PF01425">
    <property type="entry name" value="Amidase"/>
    <property type="match status" value="1"/>
</dbReference>
<dbReference type="SUPFAM" id="SSF75304">
    <property type="entry name" value="Amidase signature (AS) enzymes"/>
    <property type="match status" value="1"/>
</dbReference>
<dbReference type="PROSITE" id="PS00571">
    <property type="entry name" value="AMIDASES"/>
    <property type="match status" value="1"/>
</dbReference>
<keyword id="KW-0067">ATP-binding</keyword>
<keyword id="KW-0436">Ligase</keyword>
<keyword id="KW-0547">Nucleotide-binding</keyword>
<keyword id="KW-0648">Protein biosynthesis</keyword>
<keyword id="KW-1185">Reference proteome</keyword>
<evidence type="ECO:0000255" key="1">
    <source>
        <dbReference type="HAMAP-Rule" id="MF_00120"/>
    </source>
</evidence>
<accession>A5VLG3</accession>
<name>GATA_LIMRD</name>
<organism>
    <name type="scientific">Limosilactobacillus reuteri (strain DSM 20016)</name>
    <name type="common">Lactobacillus reuteri</name>
    <dbReference type="NCBI Taxonomy" id="557436"/>
    <lineage>
        <taxon>Bacteria</taxon>
        <taxon>Bacillati</taxon>
        <taxon>Bacillota</taxon>
        <taxon>Bacilli</taxon>
        <taxon>Lactobacillales</taxon>
        <taxon>Lactobacillaceae</taxon>
        <taxon>Limosilactobacillus</taxon>
    </lineage>
</organism>
<gene>
    <name evidence="1" type="primary">gatA</name>
    <name type="ordered locus">Lreu_1441</name>
</gene>
<comment type="function">
    <text evidence="1">Allows the formation of correctly charged Gln-tRNA(Gln) through the transamidation of misacylated Glu-tRNA(Gln) in organisms which lack glutaminyl-tRNA synthetase. The reaction takes place in the presence of glutamine and ATP through an activated gamma-phospho-Glu-tRNA(Gln).</text>
</comment>
<comment type="catalytic activity">
    <reaction evidence="1">
        <text>L-glutamyl-tRNA(Gln) + L-glutamine + ATP + H2O = L-glutaminyl-tRNA(Gln) + L-glutamate + ADP + phosphate + H(+)</text>
        <dbReference type="Rhea" id="RHEA:17521"/>
        <dbReference type="Rhea" id="RHEA-COMP:9681"/>
        <dbReference type="Rhea" id="RHEA-COMP:9684"/>
        <dbReference type="ChEBI" id="CHEBI:15377"/>
        <dbReference type="ChEBI" id="CHEBI:15378"/>
        <dbReference type="ChEBI" id="CHEBI:29985"/>
        <dbReference type="ChEBI" id="CHEBI:30616"/>
        <dbReference type="ChEBI" id="CHEBI:43474"/>
        <dbReference type="ChEBI" id="CHEBI:58359"/>
        <dbReference type="ChEBI" id="CHEBI:78520"/>
        <dbReference type="ChEBI" id="CHEBI:78521"/>
        <dbReference type="ChEBI" id="CHEBI:456216"/>
        <dbReference type="EC" id="6.3.5.7"/>
    </reaction>
</comment>
<comment type="subunit">
    <text evidence="1">Heterotrimer of A, B and C subunits.</text>
</comment>
<comment type="similarity">
    <text evidence="1">Belongs to the amidase family. GatA subfamily.</text>
</comment>
<sequence length="490" mass="53010">MDFYQTSLSQLHDDLVNKKISATELTKETFDHIKGNEDQVKAFISLNEDQALKRAAEIDAKGISADQLTAGVPLAVKDNILTKGLTTTAASKMLENFNPVYDATVVEKLNAADYINVGKTNLDEFAMGSSTENSAFFTTHNPWDLTRVPGGSSGGSAAAVAAGDVLGALGTDTGGSIRMPASFNGVVGMKPTYGRVSRWGIIAFGSSFDQVGWLTQNVKDNALLTALISGNDERDMTSSLKEVPDWAAQLNENTNVKGLRIAVPKEYFDGLDEDVQEVIKAALDHLESLGAIVDEVSLPHTKYGVPAYYILASSEASSNLQRYDGIRYGFRAADVKNLEDVYVRSRSEGFGEEVKRRIMLGTFSLSAGFYDAYFNKAAKVRRLIAQDFEDVFKDHDVIVGATGASTAFKIGAEIDDPQTMYMNDVLTVPVNMAGLPAMSIPAGFSAKNGMPVGLQIIGKAFDEQTVYNTGYVFEQTTDFHKKTPKLGGQN</sequence>
<protein>
    <recommendedName>
        <fullName evidence="1">Glutamyl-tRNA(Gln) amidotransferase subunit A</fullName>
        <shortName evidence="1">Glu-ADT subunit A</shortName>
        <ecNumber evidence="1">6.3.5.7</ecNumber>
    </recommendedName>
</protein>
<reference key="1">
    <citation type="journal article" date="2011" name="PLoS Genet.">
        <title>The evolution of host specialization in the vertebrate gut symbiont Lactobacillus reuteri.</title>
        <authorList>
            <person name="Frese S.A."/>
            <person name="Benson A.K."/>
            <person name="Tannock G.W."/>
            <person name="Loach D.M."/>
            <person name="Kim J."/>
            <person name="Zhang M."/>
            <person name="Oh P.L."/>
            <person name="Heng N.C."/>
            <person name="Patil P.B."/>
            <person name="Juge N."/>
            <person name="Mackenzie D.A."/>
            <person name="Pearson B.M."/>
            <person name="Lapidus A."/>
            <person name="Dalin E."/>
            <person name="Tice H."/>
            <person name="Goltsman E."/>
            <person name="Land M."/>
            <person name="Hauser L."/>
            <person name="Ivanova N."/>
            <person name="Kyrpides N.C."/>
            <person name="Walter J."/>
        </authorList>
    </citation>
    <scope>NUCLEOTIDE SEQUENCE [LARGE SCALE GENOMIC DNA]</scope>
    <source>
        <strain>DSM 20016</strain>
    </source>
</reference>
<proteinExistence type="inferred from homology"/>
<feature type="chain" id="PRO_1000057796" description="Glutamyl-tRNA(Gln) amidotransferase subunit A">
    <location>
        <begin position="1"/>
        <end position="490"/>
    </location>
</feature>
<feature type="active site" description="Charge relay system" evidence="1">
    <location>
        <position position="77"/>
    </location>
</feature>
<feature type="active site" description="Charge relay system" evidence="1">
    <location>
        <position position="152"/>
    </location>
</feature>
<feature type="active site" description="Acyl-ester intermediate" evidence="1">
    <location>
        <position position="176"/>
    </location>
</feature>